<sequence>MAANGSNVVSRGAVRFTEEQEALVLKSWAIMKNDSAHIGHRFFLKIFEVAPSARQLFSFLRNSDVPLEKNPKLKIHAMAVFVMTCEAAAQLRKTGRVTVRDTTIKRLGSTHFKNGVSDAHFEVAKFALLETIKEAVPASMWSPAMKGAWGEAYDHLVAAIKQGMKPAAA</sequence>
<keyword id="KW-0963">Cytoplasm</keyword>
<keyword id="KW-0349">Heme</keyword>
<keyword id="KW-0408">Iron</keyword>
<keyword id="KW-0479">Metal-binding</keyword>
<keyword id="KW-0539">Nucleus</keyword>
<keyword id="KW-0560">Oxidoreductase</keyword>
<keyword id="KW-0561">Oxygen transport</keyword>
<keyword id="KW-1185">Reference proteome</keyword>
<keyword id="KW-0813">Transport</keyword>
<organism>
    <name type="scientific">Oryza sativa subsp. japonica</name>
    <name type="common">Rice</name>
    <dbReference type="NCBI Taxonomy" id="39947"/>
    <lineage>
        <taxon>Eukaryota</taxon>
        <taxon>Viridiplantae</taxon>
        <taxon>Streptophyta</taxon>
        <taxon>Embryophyta</taxon>
        <taxon>Tracheophyta</taxon>
        <taxon>Spermatophyta</taxon>
        <taxon>Magnoliopsida</taxon>
        <taxon>Liliopsida</taxon>
        <taxon>Poales</taxon>
        <taxon>Poaceae</taxon>
        <taxon>BOP clade</taxon>
        <taxon>Oryzoideae</taxon>
        <taxon>Oryzeae</taxon>
        <taxon>Oryzinae</taxon>
        <taxon>Oryza</taxon>
        <taxon>Oryza sativa</taxon>
    </lineage>
</organism>
<comment type="function">
    <text evidence="2 4">Phytoglobin that reduces nitrite to nitric oxide under anoxic conditions (e.g. during flooding or in waterlogged soil) (By similarity). May not function as an oxygen storage or transport protein (By similarity). Has an unusually high affinity for O(2) through an hexacoordinate heme iron because of a very low dissociation constant (By similarity).</text>
</comment>
<comment type="catalytic activity">
    <reaction evidence="2">
        <text>Fe(III)-heme b-[protein] + nitric oxide + H2O = Fe(II)-heme b-[protein] + nitrite + 2 H(+)</text>
        <dbReference type="Rhea" id="RHEA:77711"/>
        <dbReference type="Rhea" id="RHEA-COMP:18975"/>
        <dbReference type="Rhea" id="RHEA-COMP:18976"/>
        <dbReference type="ChEBI" id="CHEBI:15377"/>
        <dbReference type="ChEBI" id="CHEBI:15378"/>
        <dbReference type="ChEBI" id="CHEBI:16301"/>
        <dbReference type="ChEBI" id="CHEBI:16480"/>
        <dbReference type="ChEBI" id="CHEBI:55376"/>
        <dbReference type="ChEBI" id="CHEBI:60344"/>
    </reaction>
    <physiologicalReaction direction="right-to-left" evidence="2">
        <dbReference type="Rhea" id="RHEA:77713"/>
    </physiologicalReaction>
</comment>
<comment type="cofactor">
    <cofactor evidence="3">
        <name>heme b</name>
        <dbReference type="ChEBI" id="CHEBI:60344"/>
    </cofactor>
    <text evidence="3">Binds 1 heme group per subunit.</text>
</comment>
<comment type="subunit">
    <text evidence="2">Homodimer.</text>
</comment>
<comment type="subcellular location">
    <subcellularLocation>
        <location evidence="1">Cytoplasm</location>
    </subcellularLocation>
    <subcellularLocation>
        <location evidence="1">Nucleus</location>
    </subcellularLocation>
</comment>
<comment type="induction">
    <text evidence="6">By flooding and etiolating but not by oxidative, nitrosative or hormonal stresses.</text>
</comment>
<comment type="similarity">
    <text evidence="9">Belongs to the plant globin family.</text>
</comment>
<comment type="sequence caution" evidence="9">
    <conflict type="erroneous gene model prediction">
        <sequence resource="EMBL-CDS" id="EAZ26181"/>
    </conflict>
</comment>
<dbReference type="EC" id="1.7.2.-" evidence="2"/>
<dbReference type="EMBL" id="AF335504">
    <property type="protein sequence ID" value="AAK72230.1"/>
    <property type="molecule type" value="Genomic_DNA"/>
</dbReference>
<dbReference type="EMBL" id="AC103891">
    <property type="protein sequence ID" value="AAM19124.1"/>
    <property type="molecule type" value="Genomic_DNA"/>
</dbReference>
<dbReference type="EMBL" id="DP000009">
    <property type="protein sequence ID" value="ABF94823.1"/>
    <property type="molecule type" value="Genomic_DNA"/>
</dbReference>
<dbReference type="EMBL" id="AP008209">
    <property type="protein sequence ID" value="BAF11391.1"/>
    <property type="molecule type" value="Genomic_DNA"/>
</dbReference>
<dbReference type="EMBL" id="AP014959">
    <property type="protein sequence ID" value="BAS83134.1"/>
    <property type="molecule type" value="Genomic_DNA"/>
</dbReference>
<dbReference type="EMBL" id="CM000140">
    <property type="protein sequence ID" value="EAZ26181.1"/>
    <property type="status" value="ALT_SEQ"/>
    <property type="molecule type" value="Genomic_DNA"/>
</dbReference>
<dbReference type="RefSeq" id="NP_001404372.1">
    <property type="nucleotide sequence ID" value="NM_001417443.1"/>
</dbReference>
<dbReference type="RefSeq" id="XP_015629792.1">
    <property type="nucleotide sequence ID" value="XM_015774306.1"/>
</dbReference>
<dbReference type="SMR" id="Q94FT8"/>
<dbReference type="FunCoup" id="Q94FT8">
    <property type="interactions" value="1089"/>
</dbReference>
<dbReference type="STRING" id="39947.Q94FT8"/>
<dbReference type="PaxDb" id="39947-Q94FT8"/>
<dbReference type="EnsemblPlants" id="Os03t0234000-00">
    <property type="protein sequence ID" value="Os03t0234000-00"/>
    <property type="gene ID" value="Os03g0234000"/>
</dbReference>
<dbReference type="GeneID" id="4332167"/>
<dbReference type="Gramene" id="Os03t0234000-00">
    <property type="protein sequence ID" value="Os03t0234000-00"/>
    <property type="gene ID" value="Os03g0234000"/>
</dbReference>
<dbReference type="KEGG" id="dosa:Os03g0234000"/>
<dbReference type="eggNOG" id="KOG3378">
    <property type="taxonomic scope" value="Eukaryota"/>
</dbReference>
<dbReference type="HOGENOM" id="CLU_003827_11_2_1"/>
<dbReference type="InParanoid" id="Q94FT8"/>
<dbReference type="OMA" id="MRQGYQD"/>
<dbReference type="OrthoDB" id="436496at2759"/>
<dbReference type="Proteomes" id="UP000000763">
    <property type="component" value="Chromosome 3"/>
</dbReference>
<dbReference type="Proteomes" id="UP000007752">
    <property type="component" value="Chromosome 3"/>
</dbReference>
<dbReference type="Proteomes" id="UP000059680">
    <property type="component" value="Chromosome 3"/>
</dbReference>
<dbReference type="GO" id="GO:0005737">
    <property type="term" value="C:cytoplasm"/>
    <property type="evidence" value="ECO:0000250"/>
    <property type="project" value="UniProtKB"/>
</dbReference>
<dbReference type="GO" id="GO:0005634">
    <property type="term" value="C:nucleus"/>
    <property type="evidence" value="ECO:0000250"/>
    <property type="project" value="UniProtKB"/>
</dbReference>
<dbReference type="GO" id="GO:0020037">
    <property type="term" value="F:heme binding"/>
    <property type="evidence" value="ECO:0007669"/>
    <property type="project" value="InterPro"/>
</dbReference>
<dbReference type="GO" id="GO:0046872">
    <property type="term" value="F:metal ion binding"/>
    <property type="evidence" value="ECO:0007669"/>
    <property type="project" value="UniProtKB-KW"/>
</dbReference>
<dbReference type="GO" id="GO:0016491">
    <property type="term" value="F:oxidoreductase activity"/>
    <property type="evidence" value="ECO:0007669"/>
    <property type="project" value="UniProtKB-KW"/>
</dbReference>
<dbReference type="GO" id="GO:0019825">
    <property type="term" value="F:oxygen binding"/>
    <property type="evidence" value="ECO:0007669"/>
    <property type="project" value="InterPro"/>
</dbReference>
<dbReference type="GO" id="GO:0005344">
    <property type="term" value="F:oxygen carrier activity"/>
    <property type="evidence" value="ECO:0007669"/>
    <property type="project" value="UniProtKB-KW"/>
</dbReference>
<dbReference type="CDD" id="cd08923">
    <property type="entry name" value="class1-2_nsHbs_Lbs"/>
    <property type="match status" value="1"/>
</dbReference>
<dbReference type="Gene3D" id="1.10.490.10">
    <property type="entry name" value="Globins"/>
    <property type="match status" value="1"/>
</dbReference>
<dbReference type="InterPro" id="IPR000971">
    <property type="entry name" value="Globin"/>
</dbReference>
<dbReference type="InterPro" id="IPR009050">
    <property type="entry name" value="Globin-like_sf"/>
</dbReference>
<dbReference type="InterPro" id="IPR012292">
    <property type="entry name" value="Globin/Proto"/>
</dbReference>
<dbReference type="InterPro" id="IPR001032">
    <property type="entry name" value="Leghaemoglobin-like"/>
</dbReference>
<dbReference type="InterPro" id="IPR019824">
    <property type="entry name" value="Leghaemoglobin_Fe_BS"/>
</dbReference>
<dbReference type="PANTHER" id="PTHR22924">
    <property type="entry name" value="LEGHEMOGLOBIN-RELATED"/>
    <property type="match status" value="1"/>
</dbReference>
<dbReference type="PANTHER" id="PTHR22924:SF98">
    <property type="entry name" value="NON-SYMBIOTIC HEMOGLOBIN 3"/>
    <property type="match status" value="1"/>
</dbReference>
<dbReference type="Pfam" id="PF00042">
    <property type="entry name" value="Globin"/>
    <property type="match status" value="1"/>
</dbReference>
<dbReference type="PRINTS" id="PR00188">
    <property type="entry name" value="PLANTGLOBIN"/>
</dbReference>
<dbReference type="SUPFAM" id="SSF46458">
    <property type="entry name" value="Globin-like"/>
    <property type="match status" value="1"/>
</dbReference>
<dbReference type="PROSITE" id="PS01033">
    <property type="entry name" value="GLOBIN"/>
    <property type="match status" value="1"/>
</dbReference>
<dbReference type="PROSITE" id="PS00208">
    <property type="entry name" value="PLANT_GLOBIN"/>
    <property type="match status" value="1"/>
</dbReference>
<name>NSHB3_ORYSJ</name>
<evidence type="ECO:0000250" key="1">
    <source>
        <dbReference type="UniProtKB" id="A2XE98"/>
    </source>
</evidence>
<evidence type="ECO:0000250" key="2">
    <source>
        <dbReference type="UniProtKB" id="O04986"/>
    </source>
</evidence>
<evidence type="ECO:0000250" key="3">
    <source>
        <dbReference type="UniProtKB" id="P68168"/>
    </source>
</evidence>
<evidence type="ECO:0000250" key="4">
    <source>
        <dbReference type="UniProtKB" id="Q42831"/>
    </source>
</evidence>
<evidence type="ECO:0000255" key="5">
    <source>
        <dbReference type="PROSITE-ProRule" id="PRU00238"/>
    </source>
</evidence>
<evidence type="ECO:0000269" key="6">
    <source>
    </source>
</evidence>
<evidence type="ECO:0000303" key="7">
    <source>
    </source>
</evidence>
<evidence type="ECO:0000303" key="8">
    <source ref="1"/>
</evidence>
<evidence type="ECO:0000305" key="9"/>
<evidence type="ECO:0000312" key="10">
    <source>
        <dbReference type="EMBL" id="AAM19124.1"/>
    </source>
</evidence>
<evidence type="ECO:0000312" key="11">
    <source>
        <dbReference type="EMBL" id="EAZ26181.1"/>
    </source>
</evidence>
<feature type="chain" id="PRO_0000193023" description="Anaerobic nitrite reductase NSHB3">
    <location>
        <begin position="1"/>
        <end position="169"/>
    </location>
</feature>
<feature type="domain" description="Globin" evidence="5">
    <location>
        <begin position="15"/>
        <end position="165"/>
    </location>
</feature>
<feature type="short sequence motif" description="Homodimerization" evidence="2">
    <location>
        <begin position="48"/>
        <end position="52"/>
    </location>
</feature>
<feature type="short sequence motif" description="Homodimerization" evidence="2">
    <location>
        <begin position="118"/>
        <end position="130"/>
    </location>
</feature>
<feature type="binding site" evidence="3">
    <location>
        <position position="58"/>
    </location>
    <ligand>
        <name>heme b</name>
        <dbReference type="ChEBI" id="CHEBI:60344"/>
    </ligand>
</feature>
<feature type="binding site" evidence="2">
    <location>
        <position position="72"/>
    </location>
    <ligand>
        <name>heme b</name>
        <dbReference type="ChEBI" id="CHEBI:60344"/>
    </ligand>
</feature>
<feature type="binding site" description="distal binding residue" evidence="5">
    <location>
        <position position="76"/>
    </location>
    <ligand>
        <name>heme b</name>
        <dbReference type="ChEBI" id="CHEBI:60344"/>
    </ligand>
    <ligandPart>
        <name>Fe</name>
        <dbReference type="ChEBI" id="CHEBI:18248"/>
    </ligandPart>
</feature>
<feature type="binding site" evidence="2">
    <location>
        <position position="106"/>
    </location>
    <ligand>
        <name>heme b</name>
        <dbReference type="ChEBI" id="CHEBI:60344"/>
    </ligand>
</feature>
<feature type="binding site" evidence="2">
    <location>
        <position position="110"/>
    </location>
    <ligand>
        <name>heme b</name>
        <dbReference type="ChEBI" id="CHEBI:60344"/>
    </ligand>
</feature>
<feature type="binding site" description="proximal binding residue" evidence="5">
    <location>
        <position position="111"/>
    </location>
    <ligand>
        <name>heme b</name>
        <dbReference type="ChEBI" id="CHEBI:60344"/>
    </ligand>
    <ligandPart>
        <name>Fe</name>
        <dbReference type="ChEBI" id="CHEBI:18248"/>
    </ligandPart>
</feature>
<feature type="site" description="Homodimerization" evidence="2">
    <location>
        <position position="146"/>
    </location>
</feature>
<gene>
    <name evidence="9" type="primary">NSHB3</name>
    <name evidence="9" type="synonym">GLB1C</name>
    <name evidence="8" type="synonym">HB3</name>
    <name evidence="7" type="synonym">Hb3-1</name>
    <name evidence="9" type="synonym">Pgb1.3</name>
    <name evidence="9" type="ordered locus">Os03g0234000</name>
    <name evidence="9" type="ordered locus">LOC_Os03g13150</name>
    <name evidence="10" type="ORF">OJ1175C11.4</name>
    <name evidence="11" type="ORF">OsJ_10048</name>
</gene>
<accession>Q94FT8</accession>
<accession>A3AFU2</accession>
<accession>Q10PH3</accession>
<reference key="1">
    <citation type="journal article" date="2002" name="Plant Physiol. Biochem.">
        <title>Mapping and analysis of a hemoglobin gene family from rice (Oryza sativa).</title>
        <authorList>
            <person name="Lira-Ruan V."/>
            <person name="Ross E.J.H."/>
            <person name="Sarath G."/>
            <person name="Klucas R.V."/>
            <person name="Arredondo-Peter R."/>
        </authorList>
    </citation>
    <scope>NUCLEOTIDE SEQUENCE [GENOMIC DNA]</scope>
    <source>
        <strain>cv. Nipponbare</strain>
    </source>
</reference>
<reference key="2">
    <citation type="journal article" date="2005" name="Genome Res.">
        <title>Sequence, annotation, and analysis of synteny between rice chromosome 3 and diverged grass species.</title>
        <authorList>
            <consortium name="The rice chromosome 3 sequencing consortium"/>
            <person name="Buell C.R."/>
            <person name="Yuan Q."/>
            <person name="Ouyang S."/>
            <person name="Liu J."/>
            <person name="Zhu W."/>
            <person name="Wang A."/>
            <person name="Maiti R."/>
            <person name="Haas B."/>
            <person name="Wortman J."/>
            <person name="Pertea M."/>
            <person name="Jones K.M."/>
            <person name="Kim M."/>
            <person name="Overton L."/>
            <person name="Tsitrin T."/>
            <person name="Fadrosh D."/>
            <person name="Bera J."/>
            <person name="Weaver B."/>
            <person name="Jin S."/>
            <person name="Johri S."/>
            <person name="Reardon M."/>
            <person name="Webb K."/>
            <person name="Hill J."/>
            <person name="Moffat K."/>
            <person name="Tallon L."/>
            <person name="Van Aken S."/>
            <person name="Lewis M."/>
            <person name="Utterback T."/>
            <person name="Feldblyum T."/>
            <person name="Zismann V."/>
            <person name="Iobst S."/>
            <person name="Hsiao J."/>
            <person name="de Vazeille A.R."/>
            <person name="Salzberg S.L."/>
            <person name="White O."/>
            <person name="Fraser C.M."/>
            <person name="Yu Y."/>
            <person name="Kim H."/>
            <person name="Rambo T."/>
            <person name="Currie J."/>
            <person name="Collura K."/>
            <person name="Kernodle-Thompson S."/>
            <person name="Wei F."/>
            <person name="Kudrna K."/>
            <person name="Ammiraju J.S.S."/>
            <person name="Luo M."/>
            <person name="Goicoechea J.L."/>
            <person name="Wing R.A."/>
            <person name="Henry D."/>
            <person name="Oates R."/>
            <person name="Palmer M."/>
            <person name="Pries G."/>
            <person name="Saski C."/>
            <person name="Simmons J."/>
            <person name="Soderlund C."/>
            <person name="Nelson W."/>
            <person name="de la Bastide M."/>
            <person name="Spiegel L."/>
            <person name="Nascimento L."/>
            <person name="Huang E."/>
            <person name="Preston R."/>
            <person name="Zutavern T."/>
            <person name="Palmer L."/>
            <person name="O'Shaughnessy A."/>
            <person name="Dike S."/>
            <person name="McCombie W.R."/>
            <person name="Minx P."/>
            <person name="Cordum H."/>
            <person name="Wilson R."/>
            <person name="Jin W."/>
            <person name="Lee H.R."/>
            <person name="Jiang J."/>
            <person name="Jackson S."/>
        </authorList>
    </citation>
    <scope>NUCLEOTIDE SEQUENCE [LARGE SCALE GENOMIC DNA]</scope>
    <source>
        <strain>cv. Nipponbare</strain>
    </source>
</reference>
<reference key="3">
    <citation type="journal article" date="2005" name="Nature">
        <title>The map-based sequence of the rice genome.</title>
        <authorList>
            <consortium name="International rice genome sequencing project (IRGSP)"/>
        </authorList>
    </citation>
    <scope>NUCLEOTIDE SEQUENCE [LARGE SCALE GENOMIC DNA]</scope>
    <source>
        <strain>cv. Nipponbare</strain>
    </source>
</reference>
<reference key="4">
    <citation type="journal article" date="2008" name="Nucleic Acids Res.">
        <title>The rice annotation project database (RAP-DB): 2008 update.</title>
        <authorList>
            <consortium name="The rice annotation project (RAP)"/>
        </authorList>
    </citation>
    <scope>GENOME REANNOTATION</scope>
    <source>
        <strain>cv. Nipponbare</strain>
    </source>
</reference>
<reference key="5">
    <citation type="journal article" date="2013" name="Rice">
        <title>Improvement of the Oryza sativa Nipponbare reference genome using next generation sequence and optical map data.</title>
        <authorList>
            <person name="Kawahara Y."/>
            <person name="de la Bastide M."/>
            <person name="Hamilton J.P."/>
            <person name="Kanamori H."/>
            <person name="McCombie W.R."/>
            <person name="Ouyang S."/>
            <person name="Schwartz D.C."/>
            <person name="Tanaka T."/>
            <person name="Wu J."/>
            <person name="Zhou S."/>
            <person name="Childs K.L."/>
            <person name="Davidson R.M."/>
            <person name="Lin H."/>
            <person name="Quesada-Ocampo L."/>
            <person name="Vaillancourt B."/>
            <person name="Sakai H."/>
            <person name="Lee S.S."/>
            <person name="Kim J."/>
            <person name="Numa H."/>
            <person name="Itoh T."/>
            <person name="Buell C.R."/>
            <person name="Matsumoto T."/>
        </authorList>
    </citation>
    <scope>GENOME REANNOTATION</scope>
    <source>
        <strain>cv. Nipponbare</strain>
    </source>
</reference>
<reference key="6">
    <citation type="journal article" date="2005" name="PLoS Biol.">
        <title>The genomes of Oryza sativa: a history of duplications.</title>
        <authorList>
            <person name="Yu J."/>
            <person name="Wang J."/>
            <person name="Lin W."/>
            <person name="Li S."/>
            <person name="Li H."/>
            <person name="Zhou J."/>
            <person name="Ni P."/>
            <person name="Dong W."/>
            <person name="Hu S."/>
            <person name="Zeng C."/>
            <person name="Zhang J."/>
            <person name="Zhang Y."/>
            <person name="Li R."/>
            <person name="Xu Z."/>
            <person name="Li S."/>
            <person name="Li X."/>
            <person name="Zheng H."/>
            <person name="Cong L."/>
            <person name="Lin L."/>
            <person name="Yin J."/>
            <person name="Geng J."/>
            <person name="Li G."/>
            <person name="Shi J."/>
            <person name="Liu J."/>
            <person name="Lv H."/>
            <person name="Li J."/>
            <person name="Wang J."/>
            <person name="Deng Y."/>
            <person name="Ran L."/>
            <person name="Shi X."/>
            <person name="Wang X."/>
            <person name="Wu Q."/>
            <person name="Li C."/>
            <person name="Ren X."/>
            <person name="Wang J."/>
            <person name="Wang X."/>
            <person name="Li D."/>
            <person name="Liu D."/>
            <person name="Zhang X."/>
            <person name="Ji Z."/>
            <person name="Zhao W."/>
            <person name="Sun Y."/>
            <person name="Zhang Z."/>
            <person name="Bao J."/>
            <person name="Han Y."/>
            <person name="Dong L."/>
            <person name="Ji J."/>
            <person name="Chen P."/>
            <person name="Wu S."/>
            <person name="Liu J."/>
            <person name="Xiao Y."/>
            <person name="Bu D."/>
            <person name="Tan J."/>
            <person name="Yang L."/>
            <person name="Ye C."/>
            <person name="Zhang J."/>
            <person name="Xu J."/>
            <person name="Zhou Y."/>
            <person name="Yu Y."/>
            <person name="Zhang B."/>
            <person name="Zhuang S."/>
            <person name="Wei H."/>
            <person name="Liu B."/>
            <person name="Lei M."/>
            <person name="Yu H."/>
            <person name="Li Y."/>
            <person name="Xu H."/>
            <person name="Wei S."/>
            <person name="He X."/>
            <person name="Fang L."/>
            <person name="Zhang Z."/>
            <person name="Zhang Y."/>
            <person name="Huang X."/>
            <person name="Su Z."/>
            <person name="Tong W."/>
            <person name="Li J."/>
            <person name="Tong Z."/>
            <person name="Li S."/>
            <person name="Ye J."/>
            <person name="Wang L."/>
            <person name="Fang L."/>
            <person name="Lei T."/>
            <person name="Chen C.-S."/>
            <person name="Chen H.-C."/>
            <person name="Xu Z."/>
            <person name="Li H."/>
            <person name="Huang H."/>
            <person name="Zhang F."/>
            <person name="Xu H."/>
            <person name="Li N."/>
            <person name="Zhao C."/>
            <person name="Li S."/>
            <person name="Dong L."/>
            <person name="Huang Y."/>
            <person name="Li L."/>
            <person name="Xi Y."/>
            <person name="Qi Q."/>
            <person name="Li W."/>
            <person name="Zhang B."/>
            <person name="Hu W."/>
            <person name="Zhang Y."/>
            <person name="Tian X."/>
            <person name="Jiao Y."/>
            <person name="Liang X."/>
            <person name="Jin J."/>
            <person name="Gao L."/>
            <person name="Zheng W."/>
            <person name="Hao B."/>
            <person name="Liu S.-M."/>
            <person name="Wang W."/>
            <person name="Yuan L."/>
            <person name="Cao M."/>
            <person name="McDermott J."/>
            <person name="Samudrala R."/>
            <person name="Wang J."/>
            <person name="Wong G.K.-S."/>
            <person name="Yang H."/>
        </authorList>
    </citation>
    <scope>NUCLEOTIDE SEQUENCE [LARGE SCALE GENOMIC DNA]</scope>
    <source>
        <strain>cv. Nipponbare</strain>
    </source>
</reference>
<reference key="7">
    <citation type="journal article" date="2001" name="Plant Sci.">
        <title>Synthesis of hemoglobins in rice (Oryza sativa var. Jackson) plants growing in normal and stress conditions.</title>
        <authorList>
            <person name="Lira-Ruan V."/>
            <person name="Sarath G."/>
            <person name="Klucas R.V."/>
            <person name="Arredondo-Peter R."/>
        </authorList>
    </citation>
    <scope>INDUCTION</scope>
    <source>
        <strain>cv. Jackson</strain>
    </source>
</reference>
<reference key="8">
    <citation type="journal article" date="2007" name="Gene">
        <title>Plant hemoglobins: what we know six decades after their discovery.</title>
        <authorList>
            <person name="Garrocho-Villegas V."/>
            <person name="Gopalasubramaniam S.K."/>
            <person name="Arredondo-Peter R."/>
        </authorList>
    </citation>
    <scope>REVIEW</scope>
</reference>
<reference key="9">
    <citation type="journal article" date="2008" name="Plant Physiol. Biochem.">
        <title>Expression and in silico structural analysis of a rice (Oryza sativa) hemoglobin 5.</title>
        <authorList>
            <person name="Garrocho-Villegas V."/>
            <person name="Bustos-Rivera G."/>
            <person name="Gough J."/>
            <person name="Vinogradov S.N."/>
            <person name="Arredondo-Peter R."/>
        </authorList>
    </citation>
    <scope>GENE FAMILY</scope>
    <source>
        <strain>cv. Morelos</strain>
    </source>
</reference>
<protein>
    <recommendedName>
        <fullName evidence="9">Anaerobic nitrite reductase NSHB3</fullName>
        <ecNumber evidence="2">1.7.2.-</ecNumber>
    </recommendedName>
    <alternativeName>
        <fullName evidence="8">Non-symbiotic hemoglobin 3</fullName>
        <shortName evidence="9">OsNSHB3</shortName>
        <shortName evidence="7">nsHb3-1</shortName>
        <shortName evidence="8">rHb3</shortName>
    </alternativeName>
    <alternativeName>
        <fullName evidence="9">ORYsa GLB1c</fullName>
    </alternativeName>
    <alternativeName>
        <fullName evidence="9">Phytoglobin 1.3</fullName>
        <shortName evidence="9">OsPgb1.3</shortName>
        <shortName evidence="9">Phytogb1.3</shortName>
    </alternativeName>
</protein>
<proteinExistence type="evidence at transcript level"/>